<name>Y1676_DICDI</name>
<reference key="1">
    <citation type="journal article" date="2002" name="Nature">
        <title>Sequence and analysis of chromosome 2 of Dictyostelium discoideum.</title>
        <authorList>
            <person name="Gloeckner G."/>
            <person name="Eichinger L."/>
            <person name="Szafranski K."/>
            <person name="Pachebat J.A."/>
            <person name="Bankier A.T."/>
            <person name="Dear P.H."/>
            <person name="Lehmann R."/>
            <person name="Baumgart C."/>
            <person name="Parra G."/>
            <person name="Abril J.F."/>
            <person name="Guigo R."/>
            <person name="Kumpf K."/>
            <person name="Tunggal B."/>
            <person name="Cox E.C."/>
            <person name="Quail M.A."/>
            <person name="Platzer M."/>
            <person name="Rosenthal A."/>
            <person name="Noegel A.A."/>
        </authorList>
    </citation>
    <scope>NUCLEOTIDE SEQUENCE [LARGE SCALE GENOMIC DNA]</scope>
    <source>
        <strain>AX4</strain>
    </source>
</reference>
<reference key="2">
    <citation type="journal article" date="2005" name="Nature">
        <title>The genome of the social amoeba Dictyostelium discoideum.</title>
        <authorList>
            <person name="Eichinger L."/>
            <person name="Pachebat J.A."/>
            <person name="Gloeckner G."/>
            <person name="Rajandream M.A."/>
            <person name="Sucgang R."/>
            <person name="Berriman M."/>
            <person name="Song J."/>
            <person name="Olsen R."/>
            <person name="Szafranski K."/>
            <person name="Xu Q."/>
            <person name="Tunggal B."/>
            <person name="Kummerfeld S."/>
            <person name="Madera M."/>
            <person name="Konfortov B.A."/>
            <person name="Rivero F."/>
            <person name="Bankier A.T."/>
            <person name="Lehmann R."/>
            <person name="Hamlin N."/>
            <person name="Davies R."/>
            <person name="Gaudet P."/>
            <person name="Fey P."/>
            <person name="Pilcher K."/>
            <person name="Chen G."/>
            <person name="Saunders D."/>
            <person name="Sodergren E.J."/>
            <person name="Davis P."/>
            <person name="Kerhornou A."/>
            <person name="Nie X."/>
            <person name="Hall N."/>
            <person name="Anjard C."/>
            <person name="Hemphill L."/>
            <person name="Bason N."/>
            <person name="Farbrother P."/>
            <person name="Desany B."/>
            <person name="Just E."/>
            <person name="Morio T."/>
            <person name="Rost R."/>
            <person name="Churcher C.M."/>
            <person name="Cooper J."/>
            <person name="Haydock S."/>
            <person name="van Driessche N."/>
            <person name="Cronin A."/>
            <person name="Goodhead I."/>
            <person name="Muzny D.M."/>
            <person name="Mourier T."/>
            <person name="Pain A."/>
            <person name="Lu M."/>
            <person name="Harper D."/>
            <person name="Lindsay R."/>
            <person name="Hauser H."/>
            <person name="James K.D."/>
            <person name="Quiles M."/>
            <person name="Madan Babu M."/>
            <person name="Saito T."/>
            <person name="Buchrieser C."/>
            <person name="Wardroper A."/>
            <person name="Felder M."/>
            <person name="Thangavelu M."/>
            <person name="Johnson D."/>
            <person name="Knights A."/>
            <person name="Loulseged H."/>
            <person name="Mungall K.L."/>
            <person name="Oliver K."/>
            <person name="Price C."/>
            <person name="Quail M.A."/>
            <person name="Urushihara H."/>
            <person name="Hernandez J."/>
            <person name="Rabbinowitsch E."/>
            <person name="Steffen D."/>
            <person name="Sanders M."/>
            <person name="Ma J."/>
            <person name="Kohara Y."/>
            <person name="Sharp S."/>
            <person name="Simmonds M.N."/>
            <person name="Spiegler S."/>
            <person name="Tivey A."/>
            <person name="Sugano S."/>
            <person name="White B."/>
            <person name="Walker D."/>
            <person name="Woodward J.R."/>
            <person name="Winckler T."/>
            <person name="Tanaka Y."/>
            <person name="Shaulsky G."/>
            <person name="Schleicher M."/>
            <person name="Weinstock G.M."/>
            <person name="Rosenthal A."/>
            <person name="Cox E.C."/>
            <person name="Chisholm R.L."/>
            <person name="Gibbs R.A."/>
            <person name="Loomis W.F."/>
            <person name="Platzer M."/>
            <person name="Kay R.R."/>
            <person name="Williams J.G."/>
            <person name="Dear P.H."/>
            <person name="Noegel A.A."/>
            <person name="Barrell B.G."/>
            <person name="Kuspa A."/>
        </authorList>
    </citation>
    <scope>NUCLEOTIDE SEQUENCE [LARGE SCALE GENOMIC DNA]</scope>
    <source>
        <strain>AX4</strain>
    </source>
</reference>
<proteinExistence type="predicted"/>
<accession>Q75JD4</accession>
<accession>Q55AN1</accession>
<sequence>MSAQRQFSEDLWDKFESVVKKVDNGKIFTQQLSKFLSKQQQIESAYAKSLVKLCKDKSFAPEVEMGTLRDSFQCYREQLELIGALHEEFSNRLEKLVTIGIDGYLEESRKQRKALIANGEKCTKDLKTAESNESKAKQNYEKLKRKQEEANEDLSKQPPGAKEQKARKTLESATKAADKGDNEYRESVKCLQQNQQKFYHEEMPRILDDLQRFEVERIDKSKDWLMEVITQNELVPPAVIIHNENIKKGIESIDRERDLQNYILVTMSGAQKPPEAQYEPYQSGGGFAIVNSSSNSNLNISRKSGELNGGGSIQNGASIISSPQQPQYQNIDHQTPPQPNIIIQQHQQSNNNNNTNNNSNVMTTPPPPQPQPQQQQLPQPTQLNNPPQPPISLSKNDSSNSINSNSNGEIVRALYDYNATEENEISFKANALIKVVLRDESGWWQGMVIGESDRIGVFPSNFISDSSDSSKKRVDVAGRKCKVLYDYRTDCEGELNIKEGEILTIEYEDEGWFFGSNESNVSARFPSNYVQVI</sequence>
<feature type="chain" id="PRO_0000384438" description="SH3 and F-BAR domain-containing protein DDB_G0271676">
    <location>
        <begin position="1"/>
        <end position="533"/>
    </location>
</feature>
<feature type="domain" description="F-BAR" evidence="3">
    <location>
        <begin position="5"/>
        <end position="258"/>
    </location>
</feature>
<feature type="domain" description="SH3 1" evidence="2">
    <location>
        <begin position="406"/>
        <end position="468"/>
    </location>
</feature>
<feature type="domain" description="SH3 2" evidence="2">
    <location>
        <begin position="476"/>
        <end position="533"/>
    </location>
</feature>
<feature type="region of interest" description="Disordered" evidence="4">
    <location>
        <begin position="126"/>
        <end position="184"/>
    </location>
</feature>
<feature type="region of interest" description="Disordered" evidence="4">
    <location>
        <begin position="301"/>
        <end position="405"/>
    </location>
</feature>
<feature type="coiled-coil region" evidence="1">
    <location>
        <begin position="76"/>
        <end position="186"/>
    </location>
</feature>
<feature type="compositionally biased region" description="Basic and acidic residues" evidence="4">
    <location>
        <begin position="126"/>
        <end position="155"/>
    </location>
</feature>
<feature type="compositionally biased region" description="Basic and acidic residues" evidence="4">
    <location>
        <begin position="162"/>
        <end position="184"/>
    </location>
</feature>
<feature type="compositionally biased region" description="Low complexity" evidence="4">
    <location>
        <begin position="318"/>
        <end position="327"/>
    </location>
</feature>
<feature type="compositionally biased region" description="Low complexity" evidence="4">
    <location>
        <begin position="340"/>
        <end position="360"/>
    </location>
</feature>
<feature type="compositionally biased region" description="Low complexity" evidence="4">
    <location>
        <begin position="372"/>
        <end position="385"/>
    </location>
</feature>
<feature type="compositionally biased region" description="Low complexity" evidence="4">
    <location>
        <begin position="392"/>
        <end position="405"/>
    </location>
</feature>
<organism>
    <name type="scientific">Dictyostelium discoideum</name>
    <name type="common">Social amoeba</name>
    <dbReference type="NCBI Taxonomy" id="44689"/>
    <lineage>
        <taxon>Eukaryota</taxon>
        <taxon>Amoebozoa</taxon>
        <taxon>Evosea</taxon>
        <taxon>Eumycetozoa</taxon>
        <taxon>Dictyostelia</taxon>
        <taxon>Dictyosteliales</taxon>
        <taxon>Dictyosteliaceae</taxon>
        <taxon>Dictyostelium</taxon>
    </lineage>
</organism>
<dbReference type="EMBL" id="AAFI02000006">
    <property type="protein sequence ID" value="EAL71528.1"/>
    <property type="molecule type" value="Genomic_DNA"/>
</dbReference>
<dbReference type="RefSeq" id="XP_645491.1">
    <property type="nucleotide sequence ID" value="XM_640399.1"/>
</dbReference>
<dbReference type="SMR" id="Q75JD4"/>
<dbReference type="FunCoup" id="Q75JD4">
    <property type="interactions" value="14"/>
</dbReference>
<dbReference type="STRING" id="44689.Q75JD4"/>
<dbReference type="PaxDb" id="44689-DDB0266842"/>
<dbReference type="EnsemblProtists" id="EAL71528">
    <property type="protein sequence ID" value="EAL71528"/>
    <property type="gene ID" value="DDB_G0271676"/>
</dbReference>
<dbReference type="GeneID" id="8618119"/>
<dbReference type="KEGG" id="ddi:DDB_G0271676"/>
<dbReference type="dictyBase" id="DDB_G0271676">
    <property type="gene designation" value="nlp"/>
</dbReference>
<dbReference type="VEuPathDB" id="AmoebaDB:DDB_G0271676"/>
<dbReference type="eggNOG" id="KOG3565">
    <property type="taxonomic scope" value="Eukaryota"/>
</dbReference>
<dbReference type="eggNOG" id="KOG4225">
    <property type="taxonomic scope" value="Eukaryota"/>
</dbReference>
<dbReference type="HOGENOM" id="CLU_511356_0_0_1"/>
<dbReference type="InParanoid" id="Q75JD4"/>
<dbReference type="OMA" id="AMAHVFK"/>
<dbReference type="PhylomeDB" id="Q75JD4"/>
<dbReference type="Reactome" id="R-DDI-8856828">
    <property type="pathway name" value="Clathrin-mediated endocytosis"/>
</dbReference>
<dbReference type="PRO" id="PR:Q75JD4"/>
<dbReference type="Proteomes" id="UP000002195">
    <property type="component" value="Chromosome 2"/>
</dbReference>
<dbReference type="GO" id="GO:0005737">
    <property type="term" value="C:cytoplasm"/>
    <property type="evidence" value="ECO:0000318"/>
    <property type="project" value="GO_Central"/>
</dbReference>
<dbReference type="GO" id="GO:0048471">
    <property type="term" value="C:perinuclear region of cytoplasm"/>
    <property type="evidence" value="ECO:0000314"/>
    <property type="project" value="dictyBase"/>
</dbReference>
<dbReference type="GO" id="GO:0031982">
    <property type="term" value="C:vesicle"/>
    <property type="evidence" value="ECO:0000314"/>
    <property type="project" value="dictyBase"/>
</dbReference>
<dbReference type="GO" id="GO:0008017">
    <property type="term" value="F:microtubule binding"/>
    <property type="evidence" value="ECO:0000314"/>
    <property type="project" value="dictyBase"/>
</dbReference>
<dbReference type="GO" id="GO:0030041">
    <property type="term" value="P:actin filament polymerization"/>
    <property type="evidence" value="ECO:0000316"/>
    <property type="project" value="dictyBase"/>
</dbReference>
<dbReference type="GO" id="GO:0043327">
    <property type="term" value="P:chemotaxis to cAMP"/>
    <property type="evidence" value="ECO:0000316"/>
    <property type="project" value="dictyBase"/>
</dbReference>
<dbReference type="GO" id="GO:0016050">
    <property type="term" value="P:vesicle organization"/>
    <property type="evidence" value="ECO:0000316"/>
    <property type="project" value="dictyBase"/>
</dbReference>
<dbReference type="CDD" id="cd07610">
    <property type="entry name" value="FCH_F-BAR"/>
    <property type="match status" value="1"/>
</dbReference>
<dbReference type="CDD" id="cd00174">
    <property type="entry name" value="SH3"/>
    <property type="match status" value="1"/>
</dbReference>
<dbReference type="FunFam" id="1.20.1270.60:FF:000060">
    <property type="entry name" value="Actin polymerization protein Bzz1"/>
    <property type="match status" value="1"/>
</dbReference>
<dbReference type="Gene3D" id="1.20.1270.60">
    <property type="entry name" value="Arfaptin homology (AH) domain/BAR domain"/>
    <property type="match status" value="1"/>
</dbReference>
<dbReference type="Gene3D" id="2.30.30.40">
    <property type="entry name" value="SH3 Domains"/>
    <property type="match status" value="2"/>
</dbReference>
<dbReference type="InterPro" id="IPR027267">
    <property type="entry name" value="AH/BAR_dom_sf"/>
</dbReference>
<dbReference type="InterPro" id="IPR031160">
    <property type="entry name" value="F_BAR"/>
</dbReference>
<dbReference type="InterPro" id="IPR001060">
    <property type="entry name" value="FCH_dom"/>
</dbReference>
<dbReference type="InterPro" id="IPR036028">
    <property type="entry name" value="SH3-like_dom_sf"/>
</dbReference>
<dbReference type="InterPro" id="IPR001452">
    <property type="entry name" value="SH3_domain"/>
</dbReference>
<dbReference type="PANTHER" id="PTHR23065:SF7">
    <property type="entry name" value="NOSTRIN, ISOFORM H"/>
    <property type="match status" value="1"/>
</dbReference>
<dbReference type="PANTHER" id="PTHR23065">
    <property type="entry name" value="PROLINE-SERINE-THREONINE PHOSPHATASE INTERACTING PROTEIN 1"/>
    <property type="match status" value="1"/>
</dbReference>
<dbReference type="Pfam" id="PF00611">
    <property type="entry name" value="FCH"/>
    <property type="match status" value="1"/>
</dbReference>
<dbReference type="Pfam" id="PF00018">
    <property type="entry name" value="SH3_1"/>
    <property type="match status" value="1"/>
</dbReference>
<dbReference type="Pfam" id="PF14604">
    <property type="entry name" value="SH3_9"/>
    <property type="match status" value="1"/>
</dbReference>
<dbReference type="PRINTS" id="PR00452">
    <property type="entry name" value="SH3DOMAIN"/>
</dbReference>
<dbReference type="SMART" id="SM00055">
    <property type="entry name" value="FCH"/>
    <property type="match status" value="1"/>
</dbReference>
<dbReference type="SMART" id="SM00326">
    <property type="entry name" value="SH3"/>
    <property type="match status" value="2"/>
</dbReference>
<dbReference type="SUPFAM" id="SSF103657">
    <property type="entry name" value="BAR/IMD domain-like"/>
    <property type="match status" value="1"/>
</dbReference>
<dbReference type="SUPFAM" id="SSF50044">
    <property type="entry name" value="SH3-domain"/>
    <property type="match status" value="2"/>
</dbReference>
<dbReference type="PROSITE" id="PS51741">
    <property type="entry name" value="F_BAR"/>
    <property type="match status" value="1"/>
</dbReference>
<dbReference type="PROSITE" id="PS50002">
    <property type="entry name" value="SH3"/>
    <property type="match status" value="2"/>
</dbReference>
<keyword id="KW-0175">Coiled coil</keyword>
<keyword id="KW-1185">Reference proteome</keyword>
<keyword id="KW-0677">Repeat</keyword>
<keyword id="KW-0728">SH3 domain</keyword>
<evidence type="ECO:0000255" key="1"/>
<evidence type="ECO:0000255" key="2">
    <source>
        <dbReference type="PROSITE-ProRule" id="PRU00192"/>
    </source>
</evidence>
<evidence type="ECO:0000255" key="3">
    <source>
        <dbReference type="PROSITE-ProRule" id="PRU01077"/>
    </source>
</evidence>
<evidence type="ECO:0000256" key="4">
    <source>
        <dbReference type="SAM" id="MobiDB-lite"/>
    </source>
</evidence>
<gene>
    <name type="ORF">DDB_G0271676</name>
</gene>
<protein>
    <recommendedName>
        <fullName>SH3 and F-BAR domain-containing protein DDB_G0271676</fullName>
    </recommendedName>
</protein>